<protein>
    <recommendedName>
        <fullName evidence="1">Large ribosomal subunit protein uL29</fullName>
    </recommendedName>
    <alternativeName>
        <fullName evidence="2">50S ribosomal protein L29</fullName>
    </alternativeName>
</protein>
<dbReference type="EMBL" id="CP001019">
    <property type="protein sequence ID" value="ACJ19033.1"/>
    <property type="molecule type" value="Genomic_DNA"/>
</dbReference>
<dbReference type="RefSeq" id="WP_005771530.1">
    <property type="nucleotide sequence ID" value="NC_011527.1"/>
</dbReference>
<dbReference type="SMR" id="B6J255"/>
<dbReference type="KEGG" id="cbg:CbuG_1759"/>
<dbReference type="HOGENOM" id="CLU_158491_1_2_6"/>
<dbReference type="GO" id="GO:0022625">
    <property type="term" value="C:cytosolic large ribosomal subunit"/>
    <property type="evidence" value="ECO:0007669"/>
    <property type="project" value="TreeGrafter"/>
</dbReference>
<dbReference type="GO" id="GO:0003735">
    <property type="term" value="F:structural constituent of ribosome"/>
    <property type="evidence" value="ECO:0007669"/>
    <property type="project" value="InterPro"/>
</dbReference>
<dbReference type="GO" id="GO:0006412">
    <property type="term" value="P:translation"/>
    <property type="evidence" value="ECO:0007669"/>
    <property type="project" value="UniProtKB-UniRule"/>
</dbReference>
<dbReference type="CDD" id="cd00427">
    <property type="entry name" value="Ribosomal_L29_HIP"/>
    <property type="match status" value="1"/>
</dbReference>
<dbReference type="FunFam" id="1.10.287.310:FF:000001">
    <property type="entry name" value="50S ribosomal protein L29"/>
    <property type="match status" value="1"/>
</dbReference>
<dbReference type="Gene3D" id="1.10.287.310">
    <property type="match status" value="1"/>
</dbReference>
<dbReference type="HAMAP" id="MF_00374">
    <property type="entry name" value="Ribosomal_uL29"/>
    <property type="match status" value="1"/>
</dbReference>
<dbReference type="InterPro" id="IPR050063">
    <property type="entry name" value="Ribosomal_protein_uL29"/>
</dbReference>
<dbReference type="InterPro" id="IPR001854">
    <property type="entry name" value="Ribosomal_uL29"/>
</dbReference>
<dbReference type="InterPro" id="IPR036049">
    <property type="entry name" value="Ribosomal_uL29_sf"/>
</dbReference>
<dbReference type="NCBIfam" id="TIGR00012">
    <property type="entry name" value="L29"/>
    <property type="match status" value="1"/>
</dbReference>
<dbReference type="PANTHER" id="PTHR10916">
    <property type="entry name" value="60S RIBOSOMAL PROTEIN L35/50S RIBOSOMAL PROTEIN L29"/>
    <property type="match status" value="1"/>
</dbReference>
<dbReference type="PANTHER" id="PTHR10916:SF0">
    <property type="entry name" value="LARGE RIBOSOMAL SUBUNIT PROTEIN UL29C"/>
    <property type="match status" value="1"/>
</dbReference>
<dbReference type="Pfam" id="PF00831">
    <property type="entry name" value="Ribosomal_L29"/>
    <property type="match status" value="1"/>
</dbReference>
<dbReference type="SUPFAM" id="SSF46561">
    <property type="entry name" value="Ribosomal protein L29 (L29p)"/>
    <property type="match status" value="1"/>
</dbReference>
<proteinExistence type="inferred from homology"/>
<accession>B6J255</accession>
<keyword id="KW-0687">Ribonucleoprotein</keyword>
<keyword id="KW-0689">Ribosomal protein</keyword>
<comment type="similarity">
    <text evidence="1">Belongs to the universal ribosomal protein uL29 family.</text>
</comment>
<gene>
    <name evidence="1" type="primary">rpmC</name>
    <name type="ordered locus">CbuG_1759</name>
</gene>
<name>RL29_COXB2</name>
<reference key="1">
    <citation type="journal article" date="2009" name="Infect. Immun.">
        <title>Comparative genomics reveal extensive transposon-mediated genomic plasticity and diversity among potential effector proteins within the genus Coxiella.</title>
        <authorList>
            <person name="Beare P.A."/>
            <person name="Unsworth N."/>
            <person name="Andoh M."/>
            <person name="Voth D.E."/>
            <person name="Omsland A."/>
            <person name="Gilk S.D."/>
            <person name="Williams K.P."/>
            <person name="Sobral B.W."/>
            <person name="Kupko J.J. III"/>
            <person name="Porcella S.F."/>
            <person name="Samuel J.E."/>
            <person name="Heinzen R.A."/>
        </authorList>
    </citation>
    <scope>NUCLEOTIDE SEQUENCE [LARGE SCALE GENOMIC DNA]</scope>
    <source>
        <strain>CbuG_Q212</strain>
    </source>
</reference>
<evidence type="ECO:0000255" key="1">
    <source>
        <dbReference type="HAMAP-Rule" id="MF_00374"/>
    </source>
</evidence>
<evidence type="ECO:0000305" key="2"/>
<organism>
    <name type="scientific">Coxiella burnetii (strain CbuG_Q212)</name>
    <name type="common">Coxiella burnetii (strain Q212)</name>
    <dbReference type="NCBI Taxonomy" id="434923"/>
    <lineage>
        <taxon>Bacteria</taxon>
        <taxon>Pseudomonadati</taxon>
        <taxon>Pseudomonadota</taxon>
        <taxon>Gammaproteobacteria</taxon>
        <taxon>Legionellales</taxon>
        <taxon>Coxiellaceae</taxon>
        <taxon>Coxiella</taxon>
    </lineage>
</organism>
<sequence>MNVNDLRNKTKAELKKELLELLKEQFNLRMQKGGGEAPRPHLFKRVRRDIARVKTLLGEKERNNE</sequence>
<feature type="chain" id="PRO_1000121755" description="Large ribosomal subunit protein uL29">
    <location>
        <begin position="1"/>
        <end position="65"/>
    </location>
</feature>